<dbReference type="EMBL" id="DQ662404">
    <property type="protein sequence ID" value="ABG49512.1"/>
    <property type="molecule type" value="Genomic_DNA"/>
</dbReference>
<dbReference type="RefSeq" id="WP_013351164.1">
    <property type="nucleotide sequence ID" value="NZ_BSRV01000005.1"/>
</dbReference>
<dbReference type="SMR" id="Q0GQS6"/>
<dbReference type="STRING" id="692420.BAMF_0515"/>
<dbReference type="eggNOG" id="COG2814">
    <property type="taxonomic scope" value="Bacteria"/>
</dbReference>
<dbReference type="OMA" id="AFQVGIM"/>
<dbReference type="OrthoDB" id="2727100at2"/>
<dbReference type="GO" id="GO:0005886">
    <property type="term" value="C:plasma membrane"/>
    <property type="evidence" value="ECO:0007669"/>
    <property type="project" value="UniProtKB-SubCell"/>
</dbReference>
<dbReference type="GO" id="GO:0022857">
    <property type="term" value="F:transmembrane transporter activity"/>
    <property type="evidence" value="ECO:0007669"/>
    <property type="project" value="InterPro"/>
</dbReference>
<dbReference type="CDD" id="cd17324">
    <property type="entry name" value="MFS_NepI_like"/>
    <property type="match status" value="1"/>
</dbReference>
<dbReference type="Gene3D" id="1.20.1250.20">
    <property type="entry name" value="MFS general substrate transporter like domains"/>
    <property type="match status" value="2"/>
</dbReference>
<dbReference type="InterPro" id="IPR011701">
    <property type="entry name" value="MFS"/>
</dbReference>
<dbReference type="InterPro" id="IPR020846">
    <property type="entry name" value="MFS_dom"/>
</dbReference>
<dbReference type="InterPro" id="IPR050189">
    <property type="entry name" value="MFS_Efflux_Transporters"/>
</dbReference>
<dbReference type="InterPro" id="IPR036259">
    <property type="entry name" value="MFS_trans_sf"/>
</dbReference>
<dbReference type="PANTHER" id="PTHR43124">
    <property type="entry name" value="PURINE EFFLUX PUMP PBUE"/>
    <property type="match status" value="1"/>
</dbReference>
<dbReference type="PANTHER" id="PTHR43124:SF10">
    <property type="entry name" value="PURINE EFFLUX PUMP PBUE"/>
    <property type="match status" value="1"/>
</dbReference>
<dbReference type="Pfam" id="PF07690">
    <property type="entry name" value="MFS_1"/>
    <property type="match status" value="1"/>
</dbReference>
<dbReference type="SUPFAM" id="SSF103473">
    <property type="entry name" value="MFS general substrate transporter"/>
    <property type="match status" value="1"/>
</dbReference>
<dbReference type="PROSITE" id="PS50850">
    <property type="entry name" value="MFS"/>
    <property type="match status" value="1"/>
</dbReference>
<protein>
    <recommendedName>
        <fullName>Purine efflux pump PbuE</fullName>
    </recommendedName>
</protein>
<name>PBUE_BACAM</name>
<sequence>MNFKVFLLAASTIAVGLVELIVGGILPQIASDLDISIVSAGQLISVFALGYAVSGPLLLAVTAKAERKRLYLIALFVFFLSNLVAYFSPNFAVLMVSRVLASMSTGLIVVLSLTIAPKIVAPEYRARAIGIIFMGFSSAIALGVPVGIIISNAFGWRVLFLGIGVLSLVSMLIISVFFEKIPAEKMIPFREQIKTIGNAKIASAHLVTLFTLAGHYTLYAYFAPFLETTLHLSSVWVSVCYFLFGLSAVCGGPFGGWLYDRLGSFKSIMLVTVSFALILFILPLSTVSLIVFLPAMVIWGLLSWSLAPAQQSYLIKIAPESSDIQQSFNTSALQIGIALGSAIGGGVIGQTGSVTATAWCGGLIVIIAVSLAVFSLTRPALKRKSA</sequence>
<organism>
    <name type="scientific">Bacillus amyloliquefaciens</name>
    <name type="common">Bacillus velezensis</name>
    <dbReference type="NCBI Taxonomy" id="1390"/>
    <lineage>
        <taxon>Bacteria</taxon>
        <taxon>Bacillati</taxon>
        <taxon>Bacillota</taxon>
        <taxon>Bacilli</taxon>
        <taxon>Bacillales</taxon>
        <taxon>Bacillaceae</taxon>
        <taxon>Bacillus</taxon>
        <taxon>Bacillus amyloliquefaciens group</taxon>
    </lineage>
</organism>
<proteinExistence type="evidence at protein level"/>
<feature type="chain" id="PRO_0000367244" description="Purine efflux pump PbuE">
    <location>
        <begin position="1"/>
        <end position="386"/>
    </location>
</feature>
<feature type="transmembrane region" description="Helical" evidence="2">
    <location>
        <begin position="5"/>
        <end position="25"/>
    </location>
</feature>
<feature type="transmembrane region" description="Helical" evidence="2">
    <location>
        <begin position="43"/>
        <end position="63"/>
    </location>
</feature>
<feature type="transmembrane region" description="Helical" evidence="2">
    <location>
        <begin position="73"/>
        <end position="93"/>
    </location>
</feature>
<feature type="transmembrane region" description="Helical" evidence="2">
    <location>
        <begin position="99"/>
        <end position="119"/>
    </location>
</feature>
<feature type="transmembrane region" description="Helical" evidence="2">
    <location>
        <begin position="129"/>
        <end position="149"/>
    </location>
</feature>
<feature type="transmembrane region" description="Helical" evidence="2">
    <location>
        <begin position="158"/>
        <end position="178"/>
    </location>
</feature>
<feature type="transmembrane region" description="Helical" evidence="2">
    <location>
        <begin position="206"/>
        <end position="226"/>
    </location>
</feature>
<feature type="transmembrane region" description="Helical" evidence="2">
    <location>
        <begin position="235"/>
        <end position="255"/>
    </location>
</feature>
<feature type="transmembrane region" description="Helical" evidence="2">
    <location>
        <begin position="262"/>
        <end position="284"/>
    </location>
</feature>
<feature type="transmembrane region" description="Helical" evidence="2">
    <location>
        <begin position="289"/>
        <end position="306"/>
    </location>
</feature>
<feature type="transmembrane region" description="Helical" evidence="2">
    <location>
        <begin position="328"/>
        <end position="348"/>
    </location>
</feature>
<feature type="transmembrane region" description="Helical" evidence="2">
    <location>
        <begin position="354"/>
        <end position="374"/>
    </location>
</feature>
<comment type="function">
    <text evidence="1 3">Involved in the efflux of purine ribonucleosides, such as guanosine, adenosine and inosine, as well as purine bases guanine, adenine and hypoxanthine, and purine base analogs 2,6-diaminopurine and 6-mercaptopurine. Therefore plays a role in maintaining the cellular purine base pools and protecting cells against toxic purine base analogs. Modulates expression of the purR and G-box regulons (By similarity).</text>
</comment>
<comment type="subcellular location">
    <subcellularLocation>
        <location evidence="4">Cell membrane</location>
        <topology evidence="4">Multi-pass membrane protein</topology>
    </subcellularLocation>
</comment>
<comment type="induction">
    <text evidence="3">Up-regulated by adenine, via the adenine-dependent riboswitch.</text>
</comment>
<comment type="similarity">
    <text evidence="4">Belongs to the major facilitator superfamily. DHA1 family. PbuE (TC 2.A.1.2.25) subfamily.</text>
</comment>
<evidence type="ECO:0000250" key="1"/>
<evidence type="ECO:0000255" key="2"/>
<evidence type="ECO:0000269" key="3">
    <source>
    </source>
</evidence>
<evidence type="ECO:0000305" key="4"/>
<accession>Q0GQS6</accession>
<reference key="1">
    <citation type="journal article" date="2007" name="Res. Microbiol.">
        <title>A new function for the Bacillus PbuE purine base efflux pump: efflux of purine nucleosides.</title>
        <authorList>
            <person name="Zakataeva N.P."/>
            <person name="Gronskiy S.V."/>
            <person name="Sheremet A.S."/>
            <person name="Kutukova E.A."/>
            <person name="Novikova A.E."/>
            <person name="Livshits V.A."/>
        </authorList>
    </citation>
    <scope>NUCLEOTIDE SEQUENCE [GENOMIC DNA]</scope>
    <scope>FUNCTION AS AN EFFLUX PUMP</scope>
    <scope>INDUCTION</scope>
    <source>
        <strain>DSM 1061 / JCM 20197 / IAM 1523 / K</strain>
    </source>
</reference>
<keyword id="KW-1003">Cell membrane</keyword>
<keyword id="KW-0472">Membrane</keyword>
<keyword id="KW-0812">Transmembrane</keyword>
<keyword id="KW-1133">Transmembrane helix</keyword>
<keyword id="KW-0813">Transport</keyword>
<gene>
    <name type="primary">pbuE</name>
</gene>